<organism>
    <name type="scientific">Streptomyces avermitilis (strain ATCC 31267 / DSM 46492 / JCM 5070 / NBRC 14893 / NCIMB 12804 / NRRL 8165 / MA-4680)</name>
    <dbReference type="NCBI Taxonomy" id="227882"/>
    <lineage>
        <taxon>Bacteria</taxon>
        <taxon>Bacillati</taxon>
        <taxon>Actinomycetota</taxon>
        <taxon>Actinomycetes</taxon>
        <taxon>Kitasatosporales</taxon>
        <taxon>Streptomycetaceae</taxon>
        <taxon>Streptomyces</taxon>
    </lineage>
</organism>
<keyword id="KW-0067">ATP-binding</keyword>
<keyword id="KW-0963">Cytoplasm</keyword>
<keyword id="KW-0418">Kinase</keyword>
<keyword id="KW-0460">Magnesium</keyword>
<keyword id="KW-0479">Metal-binding</keyword>
<keyword id="KW-0546">Nucleotide metabolism</keyword>
<keyword id="KW-0547">Nucleotide-binding</keyword>
<keyword id="KW-0597">Phosphoprotein</keyword>
<keyword id="KW-1185">Reference proteome</keyword>
<keyword id="KW-0808">Transferase</keyword>
<comment type="function">
    <text evidence="1">Major role in the synthesis of nucleoside triphosphates other than ATP. The ATP gamma phosphate is transferred to the NDP beta phosphate via a ping-pong mechanism, using a phosphorylated active-site intermediate.</text>
</comment>
<comment type="catalytic activity">
    <reaction evidence="1">
        <text>a 2'-deoxyribonucleoside 5'-diphosphate + ATP = a 2'-deoxyribonucleoside 5'-triphosphate + ADP</text>
        <dbReference type="Rhea" id="RHEA:44640"/>
        <dbReference type="ChEBI" id="CHEBI:30616"/>
        <dbReference type="ChEBI" id="CHEBI:61560"/>
        <dbReference type="ChEBI" id="CHEBI:73316"/>
        <dbReference type="ChEBI" id="CHEBI:456216"/>
        <dbReference type="EC" id="2.7.4.6"/>
    </reaction>
</comment>
<comment type="catalytic activity">
    <reaction evidence="1">
        <text>a ribonucleoside 5'-diphosphate + ATP = a ribonucleoside 5'-triphosphate + ADP</text>
        <dbReference type="Rhea" id="RHEA:18113"/>
        <dbReference type="ChEBI" id="CHEBI:30616"/>
        <dbReference type="ChEBI" id="CHEBI:57930"/>
        <dbReference type="ChEBI" id="CHEBI:61557"/>
        <dbReference type="ChEBI" id="CHEBI:456216"/>
        <dbReference type="EC" id="2.7.4.6"/>
    </reaction>
</comment>
<comment type="cofactor">
    <cofactor evidence="1">
        <name>Mg(2+)</name>
        <dbReference type="ChEBI" id="CHEBI:18420"/>
    </cofactor>
</comment>
<comment type="subunit">
    <text evidence="1">Homotetramer.</text>
</comment>
<comment type="subcellular location">
    <subcellularLocation>
        <location evidence="1">Cytoplasm</location>
    </subcellularLocation>
</comment>
<comment type="similarity">
    <text evidence="1">Belongs to the NDK family.</text>
</comment>
<evidence type="ECO:0000255" key="1">
    <source>
        <dbReference type="HAMAP-Rule" id="MF_00451"/>
    </source>
</evidence>
<accession>Q82CA0</accession>
<reference key="1">
    <citation type="journal article" date="2001" name="Proc. Natl. Acad. Sci. U.S.A.">
        <title>Genome sequence of an industrial microorganism Streptomyces avermitilis: deducing the ability of producing secondary metabolites.</title>
        <authorList>
            <person name="Omura S."/>
            <person name="Ikeda H."/>
            <person name="Ishikawa J."/>
            <person name="Hanamoto A."/>
            <person name="Takahashi C."/>
            <person name="Shinose M."/>
            <person name="Takahashi Y."/>
            <person name="Horikawa H."/>
            <person name="Nakazawa H."/>
            <person name="Osonoe T."/>
            <person name="Kikuchi H."/>
            <person name="Shiba T."/>
            <person name="Sakaki Y."/>
            <person name="Hattori M."/>
        </authorList>
    </citation>
    <scope>NUCLEOTIDE SEQUENCE [LARGE SCALE GENOMIC DNA]</scope>
    <source>
        <strain>ATCC 31267 / DSM 46492 / JCM 5070 / NBRC 14893 / NCIMB 12804 / NRRL 8165 / MA-4680</strain>
    </source>
</reference>
<reference key="2">
    <citation type="journal article" date="2003" name="Nat. Biotechnol.">
        <title>Complete genome sequence and comparative analysis of the industrial microorganism Streptomyces avermitilis.</title>
        <authorList>
            <person name="Ikeda H."/>
            <person name="Ishikawa J."/>
            <person name="Hanamoto A."/>
            <person name="Shinose M."/>
            <person name="Kikuchi H."/>
            <person name="Shiba T."/>
            <person name="Sakaki Y."/>
            <person name="Hattori M."/>
            <person name="Omura S."/>
        </authorList>
    </citation>
    <scope>NUCLEOTIDE SEQUENCE [LARGE SCALE GENOMIC DNA]</scope>
    <source>
        <strain>ATCC 31267 / DSM 46492 / JCM 5070 / NBRC 14893 / NCIMB 12804 / NRRL 8165 / MA-4680</strain>
    </source>
</reference>
<feature type="chain" id="PRO_1000026303" description="Nucleoside diphosphate kinase">
    <location>
        <begin position="1"/>
        <end position="137"/>
    </location>
</feature>
<feature type="active site" description="Pros-phosphohistidine intermediate" evidence="1">
    <location>
        <position position="117"/>
    </location>
</feature>
<feature type="binding site" evidence="1">
    <location>
        <position position="10"/>
    </location>
    <ligand>
        <name>ATP</name>
        <dbReference type="ChEBI" id="CHEBI:30616"/>
    </ligand>
</feature>
<feature type="binding site" evidence="1">
    <location>
        <position position="59"/>
    </location>
    <ligand>
        <name>ATP</name>
        <dbReference type="ChEBI" id="CHEBI:30616"/>
    </ligand>
</feature>
<feature type="binding site" evidence="1">
    <location>
        <position position="87"/>
    </location>
    <ligand>
        <name>ATP</name>
        <dbReference type="ChEBI" id="CHEBI:30616"/>
    </ligand>
</feature>
<feature type="binding site" evidence="1">
    <location>
        <position position="93"/>
    </location>
    <ligand>
        <name>ATP</name>
        <dbReference type="ChEBI" id="CHEBI:30616"/>
    </ligand>
</feature>
<feature type="binding site" evidence="1">
    <location>
        <position position="104"/>
    </location>
    <ligand>
        <name>ATP</name>
        <dbReference type="ChEBI" id="CHEBI:30616"/>
    </ligand>
</feature>
<feature type="binding site" evidence="1">
    <location>
        <position position="114"/>
    </location>
    <ligand>
        <name>ATP</name>
        <dbReference type="ChEBI" id="CHEBI:30616"/>
    </ligand>
</feature>
<name>NDK_STRAW</name>
<proteinExistence type="inferred from homology"/>
<sequence>MSQRTLVLLKPDAVRRGLTGEIISRIERKAGWAITALELRTLDQDTLEQHYGEHKGKPFYEPLVEFMASGPVVALVVEGERVIEGVRALAGPTDPIAAAPGSIRGDYGVIVRENLIHASDSEESAERELKIFFPGRV</sequence>
<dbReference type="EC" id="2.7.4.6" evidence="1"/>
<dbReference type="EMBL" id="BA000030">
    <property type="protein sequence ID" value="BAC73166.1"/>
    <property type="molecule type" value="Genomic_DNA"/>
</dbReference>
<dbReference type="RefSeq" id="WP_010986856.1">
    <property type="nucleotide sequence ID" value="NZ_JZJK01000066.1"/>
</dbReference>
<dbReference type="SMR" id="Q82CA0"/>
<dbReference type="GeneID" id="41542546"/>
<dbReference type="KEGG" id="sma:SAVERM_5454"/>
<dbReference type="eggNOG" id="COG0105">
    <property type="taxonomic scope" value="Bacteria"/>
</dbReference>
<dbReference type="HOGENOM" id="CLU_060216_6_3_11"/>
<dbReference type="OrthoDB" id="9801161at2"/>
<dbReference type="Proteomes" id="UP000000428">
    <property type="component" value="Chromosome"/>
</dbReference>
<dbReference type="GO" id="GO:0005737">
    <property type="term" value="C:cytoplasm"/>
    <property type="evidence" value="ECO:0007669"/>
    <property type="project" value="UniProtKB-SubCell"/>
</dbReference>
<dbReference type="GO" id="GO:0005524">
    <property type="term" value="F:ATP binding"/>
    <property type="evidence" value="ECO:0007669"/>
    <property type="project" value="UniProtKB-UniRule"/>
</dbReference>
<dbReference type="GO" id="GO:0046872">
    <property type="term" value="F:metal ion binding"/>
    <property type="evidence" value="ECO:0007669"/>
    <property type="project" value="UniProtKB-KW"/>
</dbReference>
<dbReference type="GO" id="GO:0004550">
    <property type="term" value="F:nucleoside diphosphate kinase activity"/>
    <property type="evidence" value="ECO:0007669"/>
    <property type="project" value="UniProtKB-UniRule"/>
</dbReference>
<dbReference type="GO" id="GO:0006241">
    <property type="term" value="P:CTP biosynthetic process"/>
    <property type="evidence" value="ECO:0007669"/>
    <property type="project" value="UniProtKB-UniRule"/>
</dbReference>
<dbReference type="GO" id="GO:0006183">
    <property type="term" value="P:GTP biosynthetic process"/>
    <property type="evidence" value="ECO:0007669"/>
    <property type="project" value="UniProtKB-UniRule"/>
</dbReference>
<dbReference type="GO" id="GO:0006228">
    <property type="term" value="P:UTP biosynthetic process"/>
    <property type="evidence" value="ECO:0007669"/>
    <property type="project" value="UniProtKB-UniRule"/>
</dbReference>
<dbReference type="CDD" id="cd04413">
    <property type="entry name" value="NDPk_I"/>
    <property type="match status" value="1"/>
</dbReference>
<dbReference type="FunFam" id="3.30.70.141:FF:000003">
    <property type="entry name" value="Nucleoside diphosphate kinase"/>
    <property type="match status" value="1"/>
</dbReference>
<dbReference type="Gene3D" id="3.30.70.141">
    <property type="entry name" value="Nucleoside diphosphate kinase-like domain"/>
    <property type="match status" value="1"/>
</dbReference>
<dbReference type="HAMAP" id="MF_00451">
    <property type="entry name" value="NDP_kinase"/>
    <property type="match status" value="1"/>
</dbReference>
<dbReference type="InterPro" id="IPR034907">
    <property type="entry name" value="NDK-like_dom"/>
</dbReference>
<dbReference type="InterPro" id="IPR036850">
    <property type="entry name" value="NDK-like_dom_sf"/>
</dbReference>
<dbReference type="InterPro" id="IPR001564">
    <property type="entry name" value="Nucleoside_diP_kinase"/>
</dbReference>
<dbReference type="InterPro" id="IPR023005">
    <property type="entry name" value="Nucleoside_diP_kinase_AS"/>
</dbReference>
<dbReference type="NCBIfam" id="NF001908">
    <property type="entry name" value="PRK00668.1"/>
    <property type="match status" value="1"/>
</dbReference>
<dbReference type="PANTHER" id="PTHR11349">
    <property type="entry name" value="NUCLEOSIDE DIPHOSPHATE KINASE"/>
    <property type="match status" value="1"/>
</dbReference>
<dbReference type="Pfam" id="PF00334">
    <property type="entry name" value="NDK"/>
    <property type="match status" value="1"/>
</dbReference>
<dbReference type="PRINTS" id="PR01243">
    <property type="entry name" value="NUCDPKINASE"/>
</dbReference>
<dbReference type="SMART" id="SM00562">
    <property type="entry name" value="NDK"/>
    <property type="match status" value="1"/>
</dbReference>
<dbReference type="SUPFAM" id="SSF54919">
    <property type="entry name" value="Nucleoside diphosphate kinase, NDK"/>
    <property type="match status" value="1"/>
</dbReference>
<dbReference type="PROSITE" id="PS00469">
    <property type="entry name" value="NDPK"/>
    <property type="match status" value="1"/>
</dbReference>
<dbReference type="PROSITE" id="PS51374">
    <property type="entry name" value="NDPK_LIKE"/>
    <property type="match status" value="1"/>
</dbReference>
<gene>
    <name evidence="1" type="primary">ndk</name>
    <name type="ordered locus">SAV_5454</name>
</gene>
<protein>
    <recommendedName>
        <fullName evidence="1">Nucleoside diphosphate kinase</fullName>
        <shortName evidence="1">NDK</shortName>
        <shortName evidence="1">NDP kinase</shortName>
        <ecNumber evidence="1">2.7.4.6</ecNumber>
    </recommendedName>
    <alternativeName>
        <fullName evidence="1">Nucleoside-2-P kinase</fullName>
    </alternativeName>
</protein>